<protein>
    <recommendedName>
        <fullName>Beta-fibrinogenase mucrofibrase-3</fullName>
        <ecNumber>3.4.21.-</ecNumber>
    </recommendedName>
    <alternativeName>
        <fullName>Snake venom serine protease</fullName>
        <shortName>SVSP</shortName>
    </alternativeName>
</protein>
<reference key="1">
    <citation type="journal article" date="1994" name="Biochem. Biophys. Res. Commun.">
        <title>Characterization of one novel venom protease with beta-fibrinogenase activity from the Taiwan habu (Trimeresurus mucrosquamatus): purification and cDNA sequence analysis.</title>
        <authorList>
            <person name="Hung C.-C."/>
            <person name="Huang K.F."/>
            <person name="Chiou S.-H."/>
        </authorList>
    </citation>
    <scope>NUCLEOTIDE SEQUENCE [MRNA]</scope>
    <scope>FUNCTION</scope>
    <scope>SUBUNIT</scope>
    <source>
        <tissue>Venom</tissue>
        <tissue>Venom gland</tissue>
    </source>
</reference>
<accession>Q91509</accession>
<comment type="function">
    <text evidence="3">Snake venom serine protease with fibrinogenolytic activities. Cleaves beta-chain of fibrinogen (FGB) efficiently and shows relatively lower activity on alpha-chain.</text>
</comment>
<comment type="subunit">
    <text evidence="3">Monomer.</text>
</comment>
<comment type="subcellular location">
    <subcellularLocation>
        <location>Secreted</location>
    </subcellularLocation>
</comment>
<comment type="tissue specificity">
    <text>Expressed by the venom gland.</text>
</comment>
<comment type="miscellaneous">
    <text evidence="4">Negative results: does not have activity on gamma-chains of fibrinogen (FGG).</text>
</comment>
<comment type="similarity">
    <text evidence="2">Belongs to the peptidase S1 family. Snake venom subfamily.</text>
</comment>
<evidence type="ECO:0000250" key="1"/>
<evidence type="ECO:0000255" key="2">
    <source>
        <dbReference type="PROSITE-ProRule" id="PRU00274"/>
    </source>
</evidence>
<evidence type="ECO:0000269" key="3">
    <source>
    </source>
</evidence>
<evidence type="ECO:0000305" key="4">
    <source>
    </source>
</evidence>
<sequence length="257" mass="28159">MVLIRVLANLLILQLSYAQKSSELVIGGDECNINEHPFLVLVYYDDYQCGGTLLNEEWVLTAAHCNGKDMEIYLGVHSKKVPNKDVQRRVPKEKFFCDSSKTYTKWNKDIMLIRLDRPVRKSAHIAPLSLPSSPPSVGSVCRVMGWGTITSPQETYPDVPHCANINLLDYEVCRAAYAGLPATSRTLCAGILEGGKDSCVGDSGGPLICNGQFQGIVSWGGDPCAQPREPGVYTNVFDHLDWIKGIIAGNTDVTCPL</sequence>
<proteinExistence type="evidence at protein level"/>
<dbReference type="EC" id="3.4.21.-"/>
<dbReference type="EMBL" id="X83223">
    <property type="protein sequence ID" value="CAA58223.1"/>
    <property type="molecule type" value="mRNA"/>
</dbReference>
<dbReference type="RefSeq" id="NP_001310175.1">
    <property type="nucleotide sequence ID" value="NM_001323246.1"/>
</dbReference>
<dbReference type="RefSeq" id="XP_015671559.1">
    <property type="nucleotide sequence ID" value="XM_015816073.1"/>
</dbReference>
<dbReference type="SMR" id="Q91509"/>
<dbReference type="MEROPS" id="S01.343"/>
<dbReference type="MEROPS" id="S01.344"/>
<dbReference type="GeneID" id="107287552"/>
<dbReference type="KEGG" id="pmur:107287552"/>
<dbReference type="OMA" id="CEAAYPW"/>
<dbReference type="OrthoDB" id="546450at2759"/>
<dbReference type="GO" id="GO:0005576">
    <property type="term" value="C:extracellular region"/>
    <property type="evidence" value="ECO:0007669"/>
    <property type="project" value="UniProtKB-SubCell"/>
</dbReference>
<dbReference type="GO" id="GO:0030141">
    <property type="term" value="C:secretory granule"/>
    <property type="evidence" value="ECO:0007669"/>
    <property type="project" value="TreeGrafter"/>
</dbReference>
<dbReference type="GO" id="GO:0004252">
    <property type="term" value="F:serine-type endopeptidase activity"/>
    <property type="evidence" value="ECO:0007669"/>
    <property type="project" value="InterPro"/>
</dbReference>
<dbReference type="GO" id="GO:0090729">
    <property type="term" value="F:toxin activity"/>
    <property type="evidence" value="ECO:0007669"/>
    <property type="project" value="UniProtKB-KW"/>
</dbReference>
<dbReference type="GO" id="GO:0006508">
    <property type="term" value="P:proteolysis"/>
    <property type="evidence" value="ECO:0007669"/>
    <property type="project" value="UniProtKB-KW"/>
</dbReference>
<dbReference type="CDD" id="cd00190">
    <property type="entry name" value="Tryp_SPc"/>
    <property type="match status" value="1"/>
</dbReference>
<dbReference type="FunFam" id="2.40.10.10:FF:000158">
    <property type="entry name" value="Thrombin-like enzyme saxthrombin"/>
    <property type="match status" value="1"/>
</dbReference>
<dbReference type="FunFam" id="2.40.10.10:FF:000153">
    <property type="entry name" value="Venom plasminogen activator TSV-PA"/>
    <property type="match status" value="1"/>
</dbReference>
<dbReference type="Gene3D" id="2.40.10.10">
    <property type="entry name" value="Trypsin-like serine proteases"/>
    <property type="match status" value="2"/>
</dbReference>
<dbReference type="InterPro" id="IPR009003">
    <property type="entry name" value="Peptidase_S1_PA"/>
</dbReference>
<dbReference type="InterPro" id="IPR043504">
    <property type="entry name" value="Peptidase_S1_PA_chymotrypsin"/>
</dbReference>
<dbReference type="InterPro" id="IPR001314">
    <property type="entry name" value="Peptidase_S1A"/>
</dbReference>
<dbReference type="InterPro" id="IPR001254">
    <property type="entry name" value="Trypsin_dom"/>
</dbReference>
<dbReference type="InterPro" id="IPR018114">
    <property type="entry name" value="TRYPSIN_HIS"/>
</dbReference>
<dbReference type="InterPro" id="IPR033116">
    <property type="entry name" value="TRYPSIN_SER"/>
</dbReference>
<dbReference type="PANTHER" id="PTHR24271:SF47">
    <property type="entry name" value="KALLIKREIN-1"/>
    <property type="match status" value="1"/>
</dbReference>
<dbReference type="PANTHER" id="PTHR24271">
    <property type="entry name" value="KALLIKREIN-RELATED"/>
    <property type="match status" value="1"/>
</dbReference>
<dbReference type="Pfam" id="PF00089">
    <property type="entry name" value="Trypsin"/>
    <property type="match status" value="1"/>
</dbReference>
<dbReference type="PRINTS" id="PR00722">
    <property type="entry name" value="CHYMOTRYPSIN"/>
</dbReference>
<dbReference type="SMART" id="SM00020">
    <property type="entry name" value="Tryp_SPc"/>
    <property type="match status" value="1"/>
</dbReference>
<dbReference type="SUPFAM" id="SSF50494">
    <property type="entry name" value="Trypsin-like serine proteases"/>
    <property type="match status" value="1"/>
</dbReference>
<dbReference type="PROSITE" id="PS50240">
    <property type="entry name" value="TRYPSIN_DOM"/>
    <property type="match status" value="1"/>
</dbReference>
<dbReference type="PROSITE" id="PS00134">
    <property type="entry name" value="TRYPSIN_HIS"/>
    <property type="match status" value="1"/>
</dbReference>
<dbReference type="PROSITE" id="PS00135">
    <property type="entry name" value="TRYPSIN_SER"/>
    <property type="match status" value="1"/>
</dbReference>
<organism>
    <name type="scientific">Protobothrops mucrosquamatus</name>
    <name type="common">Taiwan habu</name>
    <name type="synonym">Trimeresurus mucrosquamatus</name>
    <dbReference type="NCBI Taxonomy" id="103944"/>
    <lineage>
        <taxon>Eukaryota</taxon>
        <taxon>Metazoa</taxon>
        <taxon>Chordata</taxon>
        <taxon>Craniata</taxon>
        <taxon>Vertebrata</taxon>
        <taxon>Euteleostomi</taxon>
        <taxon>Lepidosauria</taxon>
        <taxon>Squamata</taxon>
        <taxon>Bifurcata</taxon>
        <taxon>Unidentata</taxon>
        <taxon>Episquamata</taxon>
        <taxon>Toxicofera</taxon>
        <taxon>Serpentes</taxon>
        <taxon>Colubroidea</taxon>
        <taxon>Viperidae</taxon>
        <taxon>Crotalinae</taxon>
        <taxon>Protobothrops</taxon>
    </lineage>
</organism>
<name>VSP3_PROMU</name>
<keyword id="KW-1015">Disulfide bond</keyword>
<keyword id="KW-1206">Fibrinogenolytic toxin</keyword>
<keyword id="KW-1199">Hemostasis impairing toxin</keyword>
<keyword id="KW-0378">Hydrolase</keyword>
<keyword id="KW-0645">Protease</keyword>
<keyword id="KW-0964">Secreted</keyword>
<keyword id="KW-0720">Serine protease</keyword>
<keyword id="KW-0732">Signal</keyword>
<keyword id="KW-0800">Toxin</keyword>
<keyword id="KW-0865">Zymogen</keyword>
<feature type="signal peptide" evidence="1">
    <location>
        <begin position="1"/>
        <end position="18"/>
    </location>
</feature>
<feature type="propeptide" id="PRO_0000028411" evidence="1">
    <location>
        <begin position="19"/>
        <end position="24"/>
    </location>
</feature>
<feature type="chain" id="PRO_0000028412" description="Beta-fibrinogenase mucrofibrase-3">
    <location>
        <begin position="25"/>
        <end position="257"/>
    </location>
</feature>
<feature type="domain" description="Peptidase S1" evidence="2">
    <location>
        <begin position="25"/>
        <end position="248"/>
    </location>
</feature>
<feature type="active site" description="Charge relay system" evidence="1">
    <location>
        <position position="64"/>
    </location>
</feature>
<feature type="active site" description="Charge relay system" evidence="1">
    <location>
        <position position="109"/>
    </location>
</feature>
<feature type="active site" description="Charge relay system" evidence="1">
    <location>
        <position position="203"/>
    </location>
</feature>
<feature type="disulfide bond" evidence="2">
    <location>
        <begin position="31"/>
        <end position="162"/>
    </location>
</feature>
<feature type="disulfide bond" evidence="2">
    <location>
        <begin position="49"/>
        <end position="65"/>
    </location>
</feature>
<feature type="disulfide bond" evidence="2">
    <location>
        <begin position="97"/>
        <end position="255"/>
    </location>
</feature>
<feature type="disulfide bond" evidence="2">
    <location>
        <begin position="141"/>
        <end position="209"/>
    </location>
</feature>
<feature type="disulfide bond" evidence="2">
    <location>
        <begin position="173"/>
        <end position="188"/>
    </location>
</feature>
<feature type="disulfide bond" evidence="2">
    <location>
        <begin position="199"/>
        <end position="224"/>
    </location>
</feature>